<gene>
    <name evidence="1" type="primary">lipB</name>
    <name type="ordered locus">SFV_0696</name>
</gene>
<comment type="function">
    <text evidence="1">Catalyzes the transfer of endogenously produced octanoic acid from octanoyl-acyl-carrier-protein onto the lipoyl domains of lipoate-dependent enzymes. Lipoyl-ACP can also act as a substrate although octanoyl-ACP is likely to be the physiological substrate.</text>
</comment>
<comment type="catalytic activity">
    <reaction evidence="1">
        <text>octanoyl-[ACP] + L-lysyl-[protein] = N(6)-octanoyl-L-lysyl-[protein] + holo-[ACP] + H(+)</text>
        <dbReference type="Rhea" id="RHEA:17665"/>
        <dbReference type="Rhea" id="RHEA-COMP:9636"/>
        <dbReference type="Rhea" id="RHEA-COMP:9685"/>
        <dbReference type="Rhea" id="RHEA-COMP:9752"/>
        <dbReference type="Rhea" id="RHEA-COMP:9928"/>
        <dbReference type="ChEBI" id="CHEBI:15378"/>
        <dbReference type="ChEBI" id="CHEBI:29969"/>
        <dbReference type="ChEBI" id="CHEBI:64479"/>
        <dbReference type="ChEBI" id="CHEBI:78463"/>
        <dbReference type="ChEBI" id="CHEBI:78809"/>
        <dbReference type="EC" id="2.3.1.181"/>
    </reaction>
</comment>
<comment type="pathway">
    <text evidence="1">Protein modification; protein lipoylation via endogenous pathway; protein N(6)-(lipoyl)lysine from octanoyl-[acyl-carrier-protein]: step 1/2.</text>
</comment>
<comment type="subcellular location">
    <subcellularLocation>
        <location evidence="1">Cytoplasm</location>
    </subcellularLocation>
</comment>
<comment type="miscellaneous">
    <text evidence="1">In the reaction, the free carboxyl group of octanoic acid is attached via an amide linkage to the epsilon-amino group of a specific lysine residue of lipoyl domains of lipoate-dependent enzymes.</text>
</comment>
<comment type="similarity">
    <text evidence="1">Belongs to the LipB family.</text>
</comment>
<organism>
    <name type="scientific">Shigella flexneri serotype 5b (strain 8401)</name>
    <dbReference type="NCBI Taxonomy" id="373384"/>
    <lineage>
        <taxon>Bacteria</taxon>
        <taxon>Pseudomonadati</taxon>
        <taxon>Pseudomonadota</taxon>
        <taxon>Gammaproteobacteria</taxon>
        <taxon>Enterobacterales</taxon>
        <taxon>Enterobacteriaceae</taxon>
        <taxon>Shigella</taxon>
    </lineage>
</organism>
<keyword id="KW-0012">Acyltransferase</keyword>
<keyword id="KW-0963">Cytoplasm</keyword>
<keyword id="KW-0808">Transferase</keyword>
<feature type="chain" id="PRO_1000001136" description="Octanoyltransferase">
    <location>
        <begin position="1"/>
        <end position="213"/>
    </location>
</feature>
<feature type="domain" description="BPL/LPL catalytic" evidence="2">
    <location>
        <begin position="32"/>
        <end position="207"/>
    </location>
</feature>
<feature type="active site" description="Acyl-thioester intermediate" evidence="1">
    <location>
        <position position="169"/>
    </location>
</feature>
<feature type="binding site" evidence="1">
    <location>
        <begin position="71"/>
        <end position="78"/>
    </location>
    <ligand>
        <name>substrate</name>
    </ligand>
</feature>
<feature type="binding site" evidence="1">
    <location>
        <begin position="138"/>
        <end position="140"/>
    </location>
    <ligand>
        <name>substrate</name>
    </ligand>
</feature>
<feature type="binding site" evidence="1">
    <location>
        <begin position="151"/>
        <end position="153"/>
    </location>
    <ligand>
        <name>substrate</name>
    </ligand>
</feature>
<feature type="site" description="Lowers pKa of active site Cys" evidence="1">
    <location>
        <position position="135"/>
    </location>
</feature>
<accession>Q0T6P0</accession>
<proteinExistence type="inferred from homology"/>
<reference key="1">
    <citation type="journal article" date="2006" name="BMC Genomics">
        <title>Complete genome sequence of Shigella flexneri 5b and comparison with Shigella flexneri 2a.</title>
        <authorList>
            <person name="Nie H."/>
            <person name="Yang F."/>
            <person name="Zhang X."/>
            <person name="Yang J."/>
            <person name="Chen L."/>
            <person name="Wang J."/>
            <person name="Xiong Z."/>
            <person name="Peng J."/>
            <person name="Sun L."/>
            <person name="Dong J."/>
            <person name="Xue Y."/>
            <person name="Xu X."/>
            <person name="Chen S."/>
            <person name="Yao Z."/>
            <person name="Shen Y."/>
            <person name="Jin Q."/>
        </authorList>
    </citation>
    <scope>NUCLEOTIDE SEQUENCE [LARGE SCALE GENOMIC DNA]</scope>
    <source>
        <strain>8401</strain>
    </source>
</reference>
<name>LIPB_SHIF8</name>
<dbReference type="EC" id="2.3.1.181" evidence="1"/>
<dbReference type="EMBL" id="CP000266">
    <property type="protein sequence ID" value="ABF02936.1"/>
    <property type="molecule type" value="Genomic_DNA"/>
</dbReference>
<dbReference type="RefSeq" id="WP_000284045.1">
    <property type="nucleotide sequence ID" value="NC_008258.1"/>
</dbReference>
<dbReference type="SMR" id="Q0T6P0"/>
<dbReference type="KEGG" id="sfv:SFV_0696"/>
<dbReference type="HOGENOM" id="CLU_035168_3_1_6"/>
<dbReference type="UniPathway" id="UPA00538">
    <property type="reaction ID" value="UER00592"/>
</dbReference>
<dbReference type="Proteomes" id="UP000000659">
    <property type="component" value="Chromosome"/>
</dbReference>
<dbReference type="GO" id="GO:0005737">
    <property type="term" value="C:cytoplasm"/>
    <property type="evidence" value="ECO:0007669"/>
    <property type="project" value="UniProtKB-SubCell"/>
</dbReference>
<dbReference type="GO" id="GO:0033819">
    <property type="term" value="F:lipoyl(octanoyl) transferase activity"/>
    <property type="evidence" value="ECO:0007669"/>
    <property type="project" value="UniProtKB-EC"/>
</dbReference>
<dbReference type="GO" id="GO:0036211">
    <property type="term" value="P:protein modification process"/>
    <property type="evidence" value="ECO:0007669"/>
    <property type="project" value="InterPro"/>
</dbReference>
<dbReference type="CDD" id="cd16444">
    <property type="entry name" value="LipB"/>
    <property type="match status" value="1"/>
</dbReference>
<dbReference type="FunFam" id="3.30.930.10:FF:000020">
    <property type="entry name" value="Octanoyltransferase"/>
    <property type="match status" value="1"/>
</dbReference>
<dbReference type="Gene3D" id="3.30.930.10">
    <property type="entry name" value="Bira Bifunctional Protein, Domain 2"/>
    <property type="match status" value="1"/>
</dbReference>
<dbReference type="HAMAP" id="MF_00013">
    <property type="entry name" value="LipB"/>
    <property type="match status" value="1"/>
</dbReference>
<dbReference type="InterPro" id="IPR045864">
    <property type="entry name" value="aa-tRNA-synth_II/BPL/LPL"/>
</dbReference>
<dbReference type="InterPro" id="IPR004143">
    <property type="entry name" value="BPL_LPL_catalytic"/>
</dbReference>
<dbReference type="InterPro" id="IPR000544">
    <property type="entry name" value="Octanoyltransferase"/>
</dbReference>
<dbReference type="InterPro" id="IPR020605">
    <property type="entry name" value="Octanoyltransferase_CS"/>
</dbReference>
<dbReference type="NCBIfam" id="TIGR00214">
    <property type="entry name" value="lipB"/>
    <property type="match status" value="1"/>
</dbReference>
<dbReference type="NCBIfam" id="NF010922">
    <property type="entry name" value="PRK14342.1"/>
    <property type="match status" value="1"/>
</dbReference>
<dbReference type="PANTHER" id="PTHR10993:SF7">
    <property type="entry name" value="LIPOYLTRANSFERASE 2, MITOCHONDRIAL-RELATED"/>
    <property type="match status" value="1"/>
</dbReference>
<dbReference type="PANTHER" id="PTHR10993">
    <property type="entry name" value="OCTANOYLTRANSFERASE"/>
    <property type="match status" value="1"/>
</dbReference>
<dbReference type="Pfam" id="PF21948">
    <property type="entry name" value="LplA-B_cat"/>
    <property type="match status" value="1"/>
</dbReference>
<dbReference type="PIRSF" id="PIRSF016262">
    <property type="entry name" value="LPLase"/>
    <property type="match status" value="1"/>
</dbReference>
<dbReference type="SUPFAM" id="SSF55681">
    <property type="entry name" value="Class II aaRS and biotin synthetases"/>
    <property type="match status" value="1"/>
</dbReference>
<dbReference type="PROSITE" id="PS51733">
    <property type="entry name" value="BPL_LPL_CATALYTIC"/>
    <property type="match status" value="1"/>
</dbReference>
<dbReference type="PROSITE" id="PS01313">
    <property type="entry name" value="LIPB"/>
    <property type="match status" value="1"/>
</dbReference>
<protein>
    <recommendedName>
        <fullName evidence="1">Octanoyltransferase</fullName>
        <ecNumber evidence="1">2.3.1.181</ecNumber>
    </recommendedName>
    <alternativeName>
        <fullName evidence="1">Lipoate-protein ligase B</fullName>
    </alternativeName>
    <alternativeName>
        <fullName evidence="1">Lipoyl/octanoyl transferase</fullName>
    </alternativeName>
    <alternativeName>
        <fullName evidence="1">Octanoyl-[acyl-carrier-protein]-protein N-octanoyltransferase</fullName>
    </alternativeName>
</protein>
<sequence length="213" mass="23910">MYQDKILVRQLGLQPYEPISRAMHEFTDTRDNSTLDEIWLVEHYPVFTQGQAGKAEHILMPGDIPVIQSDRGGQVTYHGPGQQVMYVLLNLKRRKLGVRELVTLLEQTVVNTLAELGIEAHPRADAPGVYVGEKKICSLGLRIRRGCSFHGLALNVNMDLSPFLRINPCGYAGMEMAKISQWKPEATTNNIAPRLLENILALLNNPDFEYITA</sequence>
<evidence type="ECO:0000255" key="1">
    <source>
        <dbReference type="HAMAP-Rule" id="MF_00013"/>
    </source>
</evidence>
<evidence type="ECO:0000255" key="2">
    <source>
        <dbReference type="PROSITE-ProRule" id="PRU01067"/>
    </source>
</evidence>